<reference key="1">
    <citation type="journal article" date="2000" name="Nucleic Acids Res.">
        <title>Complete genome sequence of the alkaliphilic bacterium Bacillus halodurans and genomic sequence comparison with Bacillus subtilis.</title>
        <authorList>
            <person name="Takami H."/>
            <person name="Nakasone K."/>
            <person name="Takaki Y."/>
            <person name="Maeno G."/>
            <person name="Sasaki R."/>
            <person name="Masui N."/>
            <person name="Fuji F."/>
            <person name="Hirama C."/>
            <person name="Nakamura Y."/>
            <person name="Ogasawara N."/>
            <person name="Kuhara S."/>
            <person name="Horikoshi K."/>
        </authorList>
    </citation>
    <scope>NUCLEOTIDE SEQUENCE [LARGE SCALE GENOMIC DNA]</scope>
    <source>
        <strain>ATCC BAA-125 / DSM 18197 / FERM 7344 / JCM 9153 / C-125</strain>
    </source>
</reference>
<keyword id="KW-0342">GTP-binding</keyword>
<keyword id="KW-0378">Hydrolase</keyword>
<keyword id="KW-0479">Metal-binding</keyword>
<keyword id="KW-0547">Nucleotide-binding</keyword>
<keyword id="KW-0554">One-carbon metabolism</keyword>
<keyword id="KW-1185">Reference proteome</keyword>
<keyword id="KW-0862">Zinc</keyword>
<accession>Q9KCC7</accession>
<proteinExistence type="inferred from homology"/>
<sequence>MSKVDHEKIQQAVVMILEAIGEDPAREGLEDTPKRVAKMYEEVFAGLNQDPKEHFATIFGEDHEELVLVKDIPFFSMCEHHLVPFFGKAHVGYIPKGGKVTGLSKLARAVEAVARRPQLQERITSTVADALVETLEPHGVIVVVEAEHMCMTMRGVKKPGAATVTSAVRGTFANDAAARAEVLSLIKG</sequence>
<comment type="catalytic activity">
    <reaction evidence="2">
        <text>GTP + H2O = 7,8-dihydroneopterin 3'-triphosphate + formate + H(+)</text>
        <dbReference type="Rhea" id="RHEA:17473"/>
        <dbReference type="ChEBI" id="CHEBI:15377"/>
        <dbReference type="ChEBI" id="CHEBI:15378"/>
        <dbReference type="ChEBI" id="CHEBI:15740"/>
        <dbReference type="ChEBI" id="CHEBI:37565"/>
        <dbReference type="ChEBI" id="CHEBI:58462"/>
        <dbReference type="EC" id="3.5.4.16"/>
    </reaction>
</comment>
<comment type="pathway">
    <text evidence="2">Cofactor biosynthesis; 7,8-dihydroneopterin triphosphate biosynthesis; 7,8-dihydroneopterin triphosphate from GTP: step 1/1.</text>
</comment>
<comment type="subunit">
    <text evidence="1">Toroid-shaped homodecamer, composed of two pentamers of five dimers.</text>
</comment>
<comment type="similarity">
    <text evidence="2">Belongs to the GTP cyclohydrolase I family.</text>
</comment>
<gene>
    <name evidence="2" type="primary">folE</name>
    <name type="synonym">mtrA</name>
    <name type="ordered locus">BH1646</name>
</gene>
<organism>
    <name type="scientific">Halalkalibacterium halodurans (strain ATCC BAA-125 / DSM 18197 / FERM 7344 / JCM 9153 / C-125)</name>
    <name type="common">Bacillus halodurans</name>
    <dbReference type="NCBI Taxonomy" id="272558"/>
    <lineage>
        <taxon>Bacteria</taxon>
        <taxon>Bacillati</taxon>
        <taxon>Bacillota</taxon>
        <taxon>Bacilli</taxon>
        <taxon>Bacillales</taxon>
        <taxon>Bacillaceae</taxon>
        <taxon>Halalkalibacterium (ex Joshi et al. 2022)</taxon>
    </lineage>
</organism>
<name>GCH1_HALH5</name>
<protein>
    <recommendedName>
        <fullName evidence="2">GTP cyclohydrolase 1</fullName>
        <ecNumber evidence="2">3.5.4.16</ecNumber>
    </recommendedName>
    <alternativeName>
        <fullName evidence="2">GTP cyclohydrolase I</fullName>
        <shortName evidence="2">GTP-CH-I</shortName>
    </alternativeName>
</protein>
<feature type="chain" id="PRO_0000119384" description="GTP cyclohydrolase 1">
    <location>
        <begin position="1"/>
        <end position="188"/>
    </location>
</feature>
<feature type="binding site" evidence="2">
    <location>
        <position position="78"/>
    </location>
    <ligand>
        <name>Zn(2+)</name>
        <dbReference type="ChEBI" id="CHEBI:29105"/>
    </ligand>
</feature>
<feature type="binding site" evidence="2">
    <location>
        <position position="81"/>
    </location>
    <ligand>
        <name>Zn(2+)</name>
        <dbReference type="ChEBI" id="CHEBI:29105"/>
    </ligand>
</feature>
<feature type="binding site" evidence="2">
    <location>
        <position position="150"/>
    </location>
    <ligand>
        <name>Zn(2+)</name>
        <dbReference type="ChEBI" id="CHEBI:29105"/>
    </ligand>
</feature>
<evidence type="ECO:0000250" key="1"/>
<evidence type="ECO:0000255" key="2">
    <source>
        <dbReference type="HAMAP-Rule" id="MF_00223"/>
    </source>
</evidence>
<dbReference type="EC" id="3.5.4.16" evidence="2"/>
<dbReference type="EMBL" id="BA000004">
    <property type="protein sequence ID" value="BAB05365.1"/>
    <property type="molecule type" value="Genomic_DNA"/>
</dbReference>
<dbReference type="PIR" id="F83855">
    <property type="entry name" value="F83855"/>
</dbReference>
<dbReference type="RefSeq" id="WP_010897808.1">
    <property type="nucleotide sequence ID" value="NC_002570.2"/>
</dbReference>
<dbReference type="SMR" id="Q9KCC7"/>
<dbReference type="STRING" id="272558.gene:10727544"/>
<dbReference type="KEGG" id="bha:BH1646"/>
<dbReference type="eggNOG" id="COG0302">
    <property type="taxonomic scope" value="Bacteria"/>
</dbReference>
<dbReference type="HOGENOM" id="CLU_049768_3_3_9"/>
<dbReference type="OrthoDB" id="9801207at2"/>
<dbReference type="UniPathway" id="UPA00848">
    <property type="reaction ID" value="UER00151"/>
</dbReference>
<dbReference type="Proteomes" id="UP000001258">
    <property type="component" value="Chromosome"/>
</dbReference>
<dbReference type="GO" id="GO:0005737">
    <property type="term" value="C:cytoplasm"/>
    <property type="evidence" value="ECO:0007669"/>
    <property type="project" value="TreeGrafter"/>
</dbReference>
<dbReference type="GO" id="GO:0005525">
    <property type="term" value="F:GTP binding"/>
    <property type="evidence" value="ECO:0007669"/>
    <property type="project" value="UniProtKB-KW"/>
</dbReference>
<dbReference type="GO" id="GO:0003934">
    <property type="term" value="F:GTP cyclohydrolase I activity"/>
    <property type="evidence" value="ECO:0007669"/>
    <property type="project" value="UniProtKB-UniRule"/>
</dbReference>
<dbReference type="GO" id="GO:0008270">
    <property type="term" value="F:zinc ion binding"/>
    <property type="evidence" value="ECO:0007669"/>
    <property type="project" value="UniProtKB-UniRule"/>
</dbReference>
<dbReference type="GO" id="GO:0006730">
    <property type="term" value="P:one-carbon metabolic process"/>
    <property type="evidence" value="ECO:0007669"/>
    <property type="project" value="UniProtKB-UniRule"/>
</dbReference>
<dbReference type="GO" id="GO:0006729">
    <property type="term" value="P:tetrahydrobiopterin biosynthetic process"/>
    <property type="evidence" value="ECO:0007669"/>
    <property type="project" value="TreeGrafter"/>
</dbReference>
<dbReference type="GO" id="GO:0046654">
    <property type="term" value="P:tetrahydrofolate biosynthetic process"/>
    <property type="evidence" value="ECO:0007669"/>
    <property type="project" value="UniProtKB-UniRule"/>
</dbReference>
<dbReference type="CDD" id="cd00642">
    <property type="entry name" value="GTP_cyclohydro1"/>
    <property type="match status" value="1"/>
</dbReference>
<dbReference type="FunFam" id="1.10.286.10:FF:000001">
    <property type="entry name" value="GTP cyclohydrolase 1"/>
    <property type="match status" value="1"/>
</dbReference>
<dbReference type="FunFam" id="3.30.1130.10:FF:000001">
    <property type="entry name" value="GTP cyclohydrolase 1"/>
    <property type="match status" value="1"/>
</dbReference>
<dbReference type="Gene3D" id="1.10.286.10">
    <property type="match status" value="1"/>
</dbReference>
<dbReference type="Gene3D" id="3.30.1130.10">
    <property type="match status" value="1"/>
</dbReference>
<dbReference type="HAMAP" id="MF_00223">
    <property type="entry name" value="FolE"/>
    <property type="match status" value="1"/>
</dbReference>
<dbReference type="InterPro" id="IPR043133">
    <property type="entry name" value="GTP-CH-I_C/QueF"/>
</dbReference>
<dbReference type="InterPro" id="IPR043134">
    <property type="entry name" value="GTP-CH-I_N"/>
</dbReference>
<dbReference type="InterPro" id="IPR001474">
    <property type="entry name" value="GTP_CycHdrlase_I"/>
</dbReference>
<dbReference type="InterPro" id="IPR018234">
    <property type="entry name" value="GTP_CycHdrlase_I_CS"/>
</dbReference>
<dbReference type="InterPro" id="IPR020602">
    <property type="entry name" value="GTP_CycHdrlase_I_dom"/>
</dbReference>
<dbReference type="NCBIfam" id="TIGR00063">
    <property type="entry name" value="folE"/>
    <property type="match status" value="1"/>
</dbReference>
<dbReference type="NCBIfam" id="NF006825">
    <property type="entry name" value="PRK09347.1-2"/>
    <property type="match status" value="1"/>
</dbReference>
<dbReference type="NCBIfam" id="NF006826">
    <property type="entry name" value="PRK09347.1-3"/>
    <property type="match status" value="1"/>
</dbReference>
<dbReference type="PANTHER" id="PTHR11109:SF7">
    <property type="entry name" value="GTP CYCLOHYDROLASE 1"/>
    <property type="match status" value="1"/>
</dbReference>
<dbReference type="PANTHER" id="PTHR11109">
    <property type="entry name" value="GTP CYCLOHYDROLASE I"/>
    <property type="match status" value="1"/>
</dbReference>
<dbReference type="Pfam" id="PF01227">
    <property type="entry name" value="GTP_cyclohydroI"/>
    <property type="match status" value="1"/>
</dbReference>
<dbReference type="SUPFAM" id="SSF55620">
    <property type="entry name" value="Tetrahydrobiopterin biosynthesis enzymes-like"/>
    <property type="match status" value="1"/>
</dbReference>
<dbReference type="PROSITE" id="PS00859">
    <property type="entry name" value="GTP_CYCLOHYDROL_1_1"/>
    <property type="match status" value="1"/>
</dbReference>
<dbReference type="PROSITE" id="PS00860">
    <property type="entry name" value="GTP_CYCLOHYDROL_1_2"/>
    <property type="match status" value="1"/>
</dbReference>